<comment type="function">
    <text evidence="1">Catalyzes the irreversible transfer of a propylamine group from the amino donor S-adenosylmethioninamine (decarboxy-AdoMet) to putrescine (1,4-diaminobutane) to yield spermidine.</text>
</comment>
<comment type="catalytic activity">
    <reaction evidence="1">
        <text>S-adenosyl 3-(methylsulfanyl)propylamine + putrescine = S-methyl-5'-thioadenosine + spermidine + H(+)</text>
        <dbReference type="Rhea" id="RHEA:12721"/>
        <dbReference type="ChEBI" id="CHEBI:15378"/>
        <dbReference type="ChEBI" id="CHEBI:17509"/>
        <dbReference type="ChEBI" id="CHEBI:57443"/>
        <dbReference type="ChEBI" id="CHEBI:57834"/>
        <dbReference type="ChEBI" id="CHEBI:326268"/>
        <dbReference type="EC" id="2.5.1.16"/>
    </reaction>
</comment>
<comment type="pathway">
    <text evidence="1">Amine and polyamine biosynthesis; spermidine biosynthesis; spermidine from putrescine: step 1/1.</text>
</comment>
<comment type="subunit">
    <text evidence="1">Homodimer or homotetramer.</text>
</comment>
<comment type="subcellular location">
    <subcellularLocation>
        <location evidence="1">Cytoplasm</location>
    </subcellularLocation>
</comment>
<comment type="similarity">
    <text evidence="1">Belongs to the spermidine/spermine synthase family.</text>
</comment>
<reference key="1">
    <citation type="journal article" date="2006" name="Science">
        <title>Genomic islands and the ecology and evolution of Prochlorococcus.</title>
        <authorList>
            <person name="Coleman M.L."/>
            <person name="Sullivan M.B."/>
            <person name="Martiny A.C."/>
            <person name="Steglich C."/>
            <person name="Barry K."/>
            <person name="Delong E.F."/>
            <person name="Chisholm S.W."/>
        </authorList>
    </citation>
    <scope>NUCLEOTIDE SEQUENCE [LARGE SCALE GENOMIC DNA]</scope>
    <source>
        <strain>MIT 9312</strain>
    </source>
</reference>
<keyword id="KW-0963">Cytoplasm</keyword>
<keyword id="KW-0620">Polyamine biosynthesis</keyword>
<keyword id="KW-0745">Spermidine biosynthesis</keyword>
<keyword id="KW-0808">Transferase</keyword>
<accession>Q317V6</accession>
<feature type="chain" id="PRO_1000012009" description="Polyamine aminopropyltransferase">
    <location>
        <begin position="1"/>
        <end position="283"/>
    </location>
</feature>
<feature type="domain" description="PABS" evidence="1">
    <location>
        <begin position="5"/>
        <end position="238"/>
    </location>
</feature>
<feature type="active site" description="Proton acceptor" evidence="1">
    <location>
        <position position="158"/>
    </location>
</feature>
<feature type="binding site" evidence="1">
    <location>
        <position position="32"/>
    </location>
    <ligand>
        <name>S-methyl-5'-thioadenosine</name>
        <dbReference type="ChEBI" id="CHEBI:17509"/>
    </ligand>
</feature>
<feature type="binding site" evidence="1">
    <location>
        <position position="63"/>
    </location>
    <ligand>
        <name>spermidine</name>
        <dbReference type="ChEBI" id="CHEBI:57834"/>
    </ligand>
</feature>
<feature type="binding site" evidence="1">
    <location>
        <position position="87"/>
    </location>
    <ligand>
        <name>spermidine</name>
        <dbReference type="ChEBI" id="CHEBI:57834"/>
    </ligand>
</feature>
<feature type="binding site" evidence="1">
    <location>
        <position position="107"/>
    </location>
    <ligand>
        <name>S-methyl-5'-thioadenosine</name>
        <dbReference type="ChEBI" id="CHEBI:17509"/>
    </ligand>
</feature>
<feature type="binding site" evidence="1">
    <location>
        <begin position="139"/>
        <end position="140"/>
    </location>
    <ligand>
        <name>S-methyl-5'-thioadenosine</name>
        <dbReference type="ChEBI" id="CHEBI:17509"/>
    </ligand>
</feature>
<feature type="binding site" evidence="1">
    <location>
        <begin position="158"/>
        <end position="161"/>
    </location>
    <ligand>
        <name>spermidine</name>
        <dbReference type="ChEBI" id="CHEBI:57834"/>
    </ligand>
</feature>
<name>SPEE_PROM9</name>
<gene>
    <name evidence="1" type="primary">speE</name>
    <name type="ordered locus">PMT9312_1778</name>
</gene>
<sequence length="283" mass="32780">MTHISTWIDEYHKGSRFGLNGEILIKQNSKYQEIIVIENEYYGRALMLDGCWMTSLKDEKYYHECLVHPALSSIDEKSNVLIIGGGDGGTARECVKYPQISKIDLVEIDEEVIKISKKFLKEIGGEAWSDKRLKIHIDDGVQWVKKTRDNFYDVIFIDCSDPSELSNLLFSDSFYRECKRILTKNGILATQSESPESFKNIHISILKTLKKFFRVSETMYSFVPIYPSGIWSWTFASEEVLHLSKRNCNEALRIEKSCEIWNLNFQNAAFKMMPNKIVKELNS</sequence>
<organism>
    <name type="scientific">Prochlorococcus marinus (strain MIT 9312)</name>
    <dbReference type="NCBI Taxonomy" id="74546"/>
    <lineage>
        <taxon>Bacteria</taxon>
        <taxon>Bacillati</taxon>
        <taxon>Cyanobacteriota</taxon>
        <taxon>Cyanophyceae</taxon>
        <taxon>Synechococcales</taxon>
        <taxon>Prochlorococcaceae</taxon>
        <taxon>Prochlorococcus</taxon>
    </lineage>
</organism>
<protein>
    <recommendedName>
        <fullName evidence="1">Polyamine aminopropyltransferase</fullName>
    </recommendedName>
    <alternativeName>
        <fullName evidence="1">Putrescine aminopropyltransferase</fullName>
        <shortName evidence="1">PAPT</shortName>
    </alternativeName>
    <alternativeName>
        <fullName evidence="1">Spermidine synthase</fullName>
        <shortName evidence="1">SPDS</shortName>
        <shortName evidence="1">SPDSY</shortName>
        <ecNumber evidence="1">2.5.1.16</ecNumber>
    </alternativeName>
</protein>
<dbReference type="EC" id="2.5.1.16" evidence="1"/>
<dbReference type="EMBL" id="CP000111">
    <property type="protein sequence ID" value="ABB50839.1"/>
    <property type="molecule type" value="Genomic_DNA"/>
</dbReference>
<dbReference type="RefSeq" id="WP_011377320.1">
    <property type="nucleotide sequence ID" value="NC_007577.1"/>
</dbReference>
<dbReference type="SMR" id="Q317V6"/>
<dbReference type="STRING" id="74546.PMT9312_1778"/>
<dbReference type="KEGG" id="pmi:PMT9312_1778"/>
<dbReference type="eggNOG" id="COG0421">
    <property type="taxonomic scope" value="Bacteria"/>
</dbReference>
<dbReference type="HOGENOM" id="CLU_048199_0_0_3"/>
<dbReference type="OrthoDB" id="9793120at2"/>
<dbReference type="UniPathway" id="UPA00248">
    <property type="reaction ID" value="UER00314"/>
</dbReference>
<dbReference type="Proteomes" id="UP000002715">
    <property type="component" value="Chromosome"/>
</dbReference>
<dbReference type="GO" id="GO:0005737">
    <property type="term" value="C:cytoplasm"/>
    <property type="evidence" value="ECO:0007669"/>
    <property type="project" value="UniProtKB-SubCell"/>
</dbReference>
<dbReference type="GO" id="GO:0004766">
    <property type="term" value="F:spermidine synthase activity"/>
    <property type="evidence" value="ECO:0007669"/>
    <property type="project" value="UniProtKB-UniRule"/>
</dbReference>
<dbReference type="GO" id="GO:0008295">
    <property type="term" value="P:spermidine biosynthetic process"/>
    <property type="evidence" value="ECO:0007669"/>
    <property type="project" value="UniProtKB-UniRule"/>
</dbReference>
<dbReference type="CDD" id="cd02440">
    <property type="entry name" value="AdoMet_MTases"/>
    <property type="match status" value="1"/>
</dbReference>
<dbReference type="Gene3D" id="2.30.140.10">
    <property type="entry name" value="Spermidine synthase, tetramerisation domain"/>
    <property type="match status" value="1"/>
</dbReference>
<dbReference type="Gene3D" id="3.40.50.150">
    <property type="entry name" value="Vaccinia Virus protein VP39"/>
    <property type="match status" value="1"/>
</dbReference>
<dbReference type="HAMAP" id="MF_00198">
    <property type="entry name" value="Spermidine_synth"/>
    <property type="match status" value="1"/>
</dbReference>
<dbReference type="InterPro" id="IPR030374">
    <property type="entry name" value="PABS"/>
</dbReference>
<dbReference type="InterPro" id="IPR030373">
    <property type="entry name" value="PABS_CS"/>
</dbReference>
<dbReference type="InterPro" id="IPR029063">
    <property type="entry name" value="SAM-dependent_MTases_sf"/>
</dbReference>
<dbReference type="InterPro" id="IPR001045">
    <property type="entry name" value="Spermi_synthase"/>
</dbReference>
<dbReference type="InterPro" id="IPR035246">
    <property type="entry name" value="Spermidine_synt_N"/>
</dbReference>
<dbReference type="InterPro" id="IPR037163">
    <property type="entry name" value="Spermidine_synt_N_sf"/>
</dbReference>
<dbReference type="NCBIfam" id="NF002010">
    <property type="entry name" value="PRK00811.1"/>
    <property type="match status" value="1"/>
</dbReference>
<dbReference type="PANTHER" id="PTHR11558:SF11">
    <property type="entry name" value="SPERMIDINE SYNTHASE"/>
    <property type="match status" value="1"/>
</dbReference>
<dbReference type="PANTHER" id="PTHR11558">
    <property type="entry name" value="SPERMIDINE/SPERMINE SYNTHASE"/>
    <property type="match status" value="1"/>
</dbReference>
<dbReference type="Pfam" id="PF17284">
    <property type="entry name" value="Spermine_synt_N"/>
    <property type="match status" value="1"/>
</dbReference>
<dbReference type="Pfam" id="PF01564">
    <property type="entry name" value="Spermine_synth"/>
    <property type="match status" value="1"/>
</dbReference>
<dbReference type="SUPFAM" id="SSF53335">
    <property type="entry name" value="S-adenosyl-L-methionine-dependent methyltransferases"/>
    <property type="match status" value="1"/>
</dbReference>
<dbReference type="PROSITE" id="PS01330">
    <property type="entry name" value="PABS_1"/>
    <property type="match status" value="1"/>
</dbReference>
<dbReference type="PROSITE" id="PS51006">
    <property type="entry name" value="PABS_2"/>
    <property type="match status" value="1"/>
</dbReference>
<proteinExistence type="inferred from homology"/>
<evidence type="ECO:0000255" key="1">
    <source>
        <dbReference type="HAMAP-Rule" id="MF_00198"/>
    </source>
</evidence>